<organism>
    <name type="scientific">Polaromonas naphthalenivorans (strain CJ2)</name>
    <dbReference type="NCBI Taxonomy" id="365044"/>
    <lineage>
        <taxon>Bacteria</taxon>
        <taxon>Pseudomonadati</taxon>
        <taxon>Pseudomonadota</taxon>
        <taxon>Betaproteobacteria</taxon>
        <taxon>Burkholderiales</taxon>
        <taxon>Comamonadaceae</taxon>
        <taxon>Polaromonas</taxon>
    </lineage>
</organism>
<name>COBQ_POLNA</name>
<reference key="1">
    <citation type="journal article" date="2009" name="Environ. Microbiol.">
        <title>The genome of Polaromonas naphthalenivorans strain CJ2, isolated from coal tar-contaminated sediment, reveals physiological and metabolic versatility and evolution through extensive horizontal gene transfer.</title>
        <authorList>
            <person name="Yagi J.M."/>
            <person name="Sims D."/>
            <person name="Brettin T."/>
            <person name="Bruce D."/>
            <person name="Madsen E.L."/>
        </authorList>
    </citation>
    <scope>NUCLEOTIDE SEQUENCE [LARGE SCALE GENOMIC DNA]</scope>
    <source>
        <strain>CJ2</strain>
    </source>
</reference>
<keyword id="KW-0169">Cobalamin biosynthesis</keyword>
<keyword id="KW-0315">Glutamine amidotransferase</keyword>
<keyword id="KW-1185">Reference proteome</keyword>
<evidence type="ECO:0000255" key="1">
    <source>
        <dbReference type="HAMAP-Rule" id="MF_00028"/>
    </source>
</evidence>
<sequence>MTAKSVMVLGTTSNAGKSWLTTALCRYYARQGLKVAPYKSQNMSNNARVVVGGEIGSAQYFQALAARAVPDVRMNPLLLKPEKDTQSQVVLMGQVNAELSRMEWRGRSLSVWPVVARALDELLAENDVVVIEGAGSPAEINLKSCDIVNMRVALHANAACLLVTDIDRGGAFAHLYGTWAMLDKTEQQLIRGFVLNKFRGDASLLAPGPQMLQELTGVPTVATLPMWWQHGLPEEDGVFDDRSTAAGAVTQTVAVIAYPRISNLDEFQPLKNVPGVRLKWVRSPSELAGLGPADWVILPGSKATSADLAWLRAQGLDQAIAAHAGRGGAVLGICGGLQMLGEALIDPHGIDGNGPGLGLLPVVTVFDEAKTVQHRQAAFASVGGPWAGLSGVEVQGYEIHHGQTARHSAMAAAGDIACPVMPDGLAWQNAAGNVLGLYLHGMFEDPRVLQALFGAATPTLESVFDGLADYIGQHFEPGVLQSLIA</sequence>
<comment type="function">
    <text evidence="1">Catalyzes amidations at positions B, D, E, and G on adenosylcobyrinic A,C-diamide. NH(2) groups are provided by glutamine, and one molecule of ATP is hydrogenolyzed for each amidation.</text>
</comment>
<comment type="pathway">
    <text evidence="1">Cofactor biosynthesis; adenosylcobalamin biosynthesis.</text>
</comment>
<comment type="similarity">
    <text evidence="1">Belongs to the CobB/CobQ family. CobQ subfamily.</text>
</comment>
<dbReference type="EMBL" id="CP000529">
    <property type="protein sequence ID" value="ABM37454.1"/>
    <property type="molecule type" value="Genomic_DNA"/>
</dbReference>
<dbReference type="RefSeq" id="WP_011801532.1">
    <property type="nucleotide sequence ID" value="NC_008781.1"/>
</dbReference>
<dbReference type="SMR" id="A1VP76"/>
<dbReference type="STRING" id="365044.Pnap_2146"/>
<dbReference type="KEGG" id="pna:Pnap_2146"/>
<dbReference type="eggNOG" id="COG1492">
    <property type="taxonomic scope" value="Bacteria"/>
</dbReference>
<dbReference type="HOGENOM" id="CLU_019250_2_1_4"/>
<dbReference type="OrthoDB" id="9808302at2"/>
<dbReference type="UniPathway" id="UPA00148"/>
<dbReference type="Proteomes" id="UP000000644">
    <property type="component" value="Chromosome"/>
</dbReference>
<dbReference type="GO" id="GO:0015420">
    <property type="term" value="F:ABC-type vitamin B12 transporter activity"/>
    <property type="evidence" value="ECO:0007669"/>
    <property type="project" value="UniProtKB-UniRule"/>
</dbReference>
<dbReference type="GO" id="GO:0003824">
    <property type="term" value="F:catalytic activity"/>
    <property type="evidence" value="ECO:0007669"/>
    <property type="project" value="InterPro"/>
</dbReference>
<dbReference type="GO" id="GO:0009236">
    <property type="term" value="P:cobalamin biosynthetic process"/>
    <property type="evidence" value="ECO:0007669"/>
    <property type="project" value="UniProtKB-UniRule"/>
</dbReference>
<dbReference type="CDD" id="cd05389">
    <property type="entry name" value="CobQ_N"/>
    <property type="match status" value="1"/>
</dbReference>
<dbReference type="CDD" id="cd01750">
    <property type="entry name" value="GATase1_CobQ"/>
    <property type="match status" value="1"/>
</dbReference>
<dbReference type="Gene3D" id="3.40.50.880">
    <property type="match status" value="1"/>
</dbReference>
<dbReference type="Gene3D" id="3.40.50.300">
    <property type="entry name" value="P-loop containing nucleotide triphosphate hydrolases"/>
    <property type="match status" value="1"/>
</dbReference>
<dbReference type="HAMAP" id="MF_00028">
    <property type="entry name" value="CobQ"/>
    <property type="match status" value="1"/>
</dbReference>
<dbReference type="InterPro" id="IPR029062">
    <property type="entry name" value="Class_I_gatase-like"/>
</dbReference>
<dbReference type="InterPro" id="IPR002586">
    <property type="entry name" value="CobQ/CobB/MinD/ParA_Nub-bd_dom"/>
</dbReference>
<dbReference type="InterPro" id="IPR033949">
    <property type="entry name" value="CobQ_GATase1"/>
</dbReference>
<dbReference type="InterPro" id="IPR047045">
    <property type="entry name" value="CobQ_N"/>
</dbReference>
<dbReference type="InterPro" id="IPR004459">
    <property type="entry name" value="CobQ_synth"/>
</dbReference>
<dbReference type="InterPro" id="IPR011698">
    <property type="entry name" value="GATase_3"/>
</dbReference>
<dbReference type="InterPro" id="IPR027417">
    <property type="entry name" value="P-loop_NTPase"/>
</dbReference>
<dbReference type="NCBIfam" id="TIGR00313">
    <property type="entry name" value="cobQ"/>
    <property type="match status" value="1"/>
</dbReference>
<dbReference type="NCBIfam" id="NF001989">
    <property type="entry name" value="PRK00784.1"/>
    <property type="match status" value="1"/>
</dbReference>
<dbReference type="PANTHER" id="PTHR21343:SF1">
    <property type="entry name" value="COBYRIC ACID SYNTHASE"/>
    <property type="match status" value="1"/>
</dbReference>
<dbReference type="PANTHER" id="PTHR21343">
    <property type="entry name" value="DETHIOBIOTIN SYNTHETASE"/>
    <property type="match status" value="1"/>
</dbReference>
<dbReference type="Pfam" id="PF01656">
    <property type="entry name" value="CbiA"/>
    <property type="match status" value="1"/>
</dbReference>
<dbReference type="Pfam" id="PF07685">
    <property type="entry name" value="GATase_3"/>
    <property type="match status" value="1"/>
</dbReference>
<dbReference type="SUPFAM" id="SSF52317">
    <property type="entry name" value="Class I glutamine amidotransferase-like"/>
    <property type="match status" value="1"/>
</dbReference>
<dbReference type="SUPFAM" id="SSF52540">
    <property type="entry name" value="P-loop containing nucleoside triphosphate hydrolases"/>
    <property type="match status" value="1"/>
</dbReference>
<dbReference type="PROSITE" id="PS51274">
    <property type="entry name" value="GATASE_COBBQ"/>
    <property type="match status" value="1"/>
</dbReference>
<feature type="chain" id="PRO_0000332359" description="Cobyric acid synthase">
    <location>
        <begin position="1"/>
        <end position="485"/>
    </location>
</feature>
<feature type="domain" description="GATase cobBQ-type" evidence="1">
    <location>
        <begin position="250"/>
        <end position="448"/>
    </location>
</feature>
<feature type="active site" description="Nucleophile" evidence="1">
    <location>
        <position position="334"/>
    </location>
</feature>
<feature type="active site" evidence="1">
    <location>
        <position position="440"/>
    </location>
</feature>
<protein>
    <recommendedName>
        <fullName evidence="1">Cobyric acid synthase</fullName>
    </recommendedName>
</protein>
<accession>A1VP76</accession>
<gene>
    <name evidence="1" type="primary">cobQ</name>
    <name type="ordered locus">Pnap_2146</name>
</gene>
<proteinExistence type="inferred from homology"/>